<protein>
    <recommendedName>
        <fullName>Protein pop-1</fullName>
    </recommendedName>
    <alternativeName>
        <fullName>Posterior pharynx defect protein 1</fullName>
    </alternativeName>
</protein>
<proteinExistence type="inferred from homology"/>
<name>POP1_CAEBR</name>
<dbReference type="EMBL" id="HE600926">
    <property type="protein sequence ID" value="CAP24984.2"/>
    <property type="molecule type" value="Genomic_DNA"/>
</dbReference>
<dbReference type="SMR" id="A8WWH5"/>
<dbReference type="FunCoup" id="A8WWH5">
    <property type="interactions" value="530"/>
</dbReference>
<dbReference type="STRING" id="6238.A8WWH5"/>
<dbReference type="EnsemblMetazoa" id="CBG04236.1">
    <property type="protein sequence ID" value="CBG04236.1"/>
    <property type="gene ID" value="WBGene00026953"/>
</dbReference>
<dbReference type="WormBase" id="CBG04236">
    <property type="protein sequence ID" value="CBP25143"/>
    <property type="gene ID" value="WBGene00026953"/>
    <property type="gene designation" value="Cbr-pop-1"/>
</dbReference>
<dbReference type="eggNOG" id="KOG3248">
    <property type="taxonomic scope" value="Eukaryota"/>
</dbReference>
<dbReference type="HOGENOM" id="CLU_625901_0_0_1"/>
<dbReference type="InParanoid" id="A8WWH5"/>
<dbReference type="OMA" id="RCLWYRE"/>
<dbReference type="OrthoDB" id="2307332at2759"/>
<dbReference type="Proteomes" id="UP000008549">
    <property type="component" value="Unassembled WGS sequence"/>
</dbReference>
<dbReference type="GO" id="GO:1990907">
    <property type="term" value="C:beta-catenin-TCF complex"/>
    <property type="evidence" value="ECO:0000318"/>
    <property type="project" value="GO_Central"/>
</dbReference>
<dbReference type="GO" id="GO:0000785">
    <property type="term" value="C:chromatin"/>
    <property type="evidence" value="ECO:0000318"/>
    <property type="project" value="GO_Central"/>
</dbReference>
<dbReference type="GO" id="GO:0005737">
    <property type="term" value="C:cytoplasm"/>
    <property type="evidence" value="ECO:0000250"/>
    <property type="project" value="UniProtKB"/>
</dbReference>
<dbReference type="GO" id="GO:0005634">
    <property type="term" value="C:nucleus"/>
    <property type="evidence" value="ECO:0000250"/>
    <property type="project" value="UniProtKB"/>
</dbReference>
<dbReference type="GO" id="GO:0008013">
    <property type="term" value="F:beta-catenin binding"/>
    <property type="evidence" value="ECO:0007669"/>
    <property type="project" value="EnsemblMetazoa"/>
</dbReference>
<dbReference type="GO" id="GO:0001228">
    <property type="term" value="F:DNA-binding transcription activator activity, RNA polymerase II-specific"/>
    <property type="evidence" value="ECO:0007669"/>
    <property type="project" value="EnsemblMetazoa"/>
</dbReference>
<dbReference type="GO" id="GO:0000981">
    <property type="term" value="F:DNA-binding transcription factor activity, RNA polymerase II-specific"/>
    <property type="evidence" value="ECO:0000318"/>
    <property type="project" value="GO_Central"/>
</dbReference>
<dbReference type="GO" id="GO:0035035">
    <property type="term" value="F:histone acetyltransferase binding"/>
    <property type="evidence" value="ECO:0007669"/>
    <property type="project" value="EnsemblMetazoa"/>
</dbReference>
<dbReference type="GO" id="GO:0042826">
    <property type="term" value="F:histone deacetylase binding"/>
    <property type="evidence" value="ECO:0007669"/>
    <property type="project" value="EnsemblMetazoa"/>
</dbReference>
<dbReference type="GO" id="GO:0019901">
    <property type="term" value="F:protein kinase binding"/>
    <property type="evidence" value="ECO:0007669"/>
    <property type="project" value="EnsemblMetazoa"/>
</dbReference>
<dbReference type="GO" id="GO:0000978">
    <property type="term" value="F:RNA polymerase II cis-regulatory region sequence-specific DNA binding"/>
    <property type="evidence" value="ECO:0000318"/>
    <property type="project" value="GO_Central"/>
</dbReference>
<dbReference type="GO" id="GO:0061629">
    <property type="term" value="F:RNA polymerase II-specific DNA-binding transcription factor binding"/>
    <property type="evidence" value="ECO:0007669"/>
    <property type="project" value="EnsemblMetazoa"/>
</dbReference>
<dbReference type="GO" id="GO:0003714">
    <property type="term" value="F:transcription corepressor activity"/>
    <property type="evidence" value="ECO:0007669"/>
    <property type="project" value="EnsemblMetazoa"/>
</dbReference>
<dbReference type="GO" id="GO:0001222">
    <property type="term" value="F:transcription corepressor binding"/>
    <property type="evidence" value="ECO:0007669"/>
    <property type="project" value="EnsemblMetazoa"/>
</dbReference>
<dbReference type="GO" id="GO:0008356">
    <property type="term" value="P:asymmetric cell division"/>
    <property type="evidence" value="ECO:0000250"/>
    <property type="project" value="UniProtKB"/>
</dbReference>
<dbReference type="GO" id="GO:0060070">
    <property type="term" value="P:canonical Wnt signaling pathway"/>
    <property type="evidence" value="ECO:0000318"/>
    <property type="project" value="GO_Central"/>
</dbReference>
<dbReference type="GO" id="GO:0009880">
    <property type="term" value="P:embryonic pattern specification"/>
    <property type="evidence" value="ECO:0007669"/>
    <property type="project" value="EnsemblMetazoa"/>
</dbReference>
<dbReference type="GO" id="GO:0035262">
    <property type="term" value="P:gonad morphogenesis"/>
    <property type="evidence" value="ECO:0007669"/>
    <property type="project" value="EnsemblMetazoa"/>
</dbReference>
<dbReference type="GO" id="GO:0007500">
    <property type="term" value="P:mesodermal cell fate determination"/>
    <property type="evidence" value="ECO:0007669"/>
    <property type="project" value="EnsemblMetazoa"/>
</dbReference>
<dbReference type="GO" id="GO:0007501">
    <property type="term" value="P:mesodermal cell fate specification"/>
    <property type="evidence" value="ECO:0007669"/>
    <property type="project" value="EnsemblMetazoa"/>
</dbReference>
<dbReference type="GO" id="GO:0034514">
    <property type="term" value="P:mitochondrial unfolded protein response"/>
    <property type="evidence" value="ECO:0007669"/>
    <property type="project" value="EnsemblMetazoa"/>
</dbReference>
<dbReference type="GO" id="GO:0051782">
    <property type="term" value="P:negative regulation of cell division"/>
    <property type="evidence" value="ECO:0007669"/>
    <property type="project" value="EnsemblMetazoa"/>
</dbReference>
<dbReference type="GO" id="GO:0045892">
    <property type="term" value="P:negative regulation of DNA-templated transcription"/>
    <property type="evidence" value="ECO:0000250"/>
    <property type="project" value="UniProtKB"/>
</dbReference>
<dbReference type="GO" id="GO:0010629">
    <property type="term" value="P:negative regulation of gene expression"/>
    <property type="evidence" value="ECO:0007669"/>
    <property type="project" value="EnsemblMetazoa"/>
</dbReference>
<dbReference type="GO" id="GO:2000647">
    <property type="term" value="P:negative regulation of stem cell proliferation"/>
    <property type="evidence" value="ECO:0007669"/>
    <property type="project" value="EnsemblMetazoa"/>
</dbReference>
<dbReference type="GO" id="GO:0160096">
    <property type="term" value="P:nematode pharyngeal muscle development"/>
    <property type="evidence" value="ECO:0007669"/>
    <property type="project" value="EnsemblMetazoa"/>
</dbReference>
<dbReference type="GO" id="GO:0010085">
    <property type="term" value="P:polarity specification of proximal/distal axis"/>
    <property type="evidence" value="ECO:0007669"/>
    <property type="project" value="EnsemblMetazoa"/>
</dbReference>
<dbReference type="GO" id="GO:0010628">
    <property type="term" value="P:positive regulation of gene expression"/>
    <property type="evidence" value="ECO:0007669"/>
    <property type="project" value="EnsemblMetazoa"/>
</dbReference>
<dbReference type="GO" id="GO:0040026">
    <property type="term" value="P:positive regulation of vulval development"/>
    <property type="evidence" value="ECO:0007669"/>
    <property type="project" value="EnsemblMetazoa"/>
</dbReference>
<dbReference type="GO" id="GO:0009786">
    <property type="term" value="P:regulation of asymmetric cell division"/>
    <property type="evidence" value="ECO:0007669"/>
    <property type="project" value="EnsemblMetazoa"/>
</dbReference>
<dbReference type="GO" id="GO:0042659">
    <property type="term" value="P:regulation of cell fate specification"/>
    <property type="evidence" value="ECO:0007669"/>
    <property type="project" value="EnsemblMetazoa"/>
</dbReference>
<dbReference type="GO" id="GO:2000746">
    <property type="term" value="P:regulation of defecation rhythm"/>
    <property type="evidence" value="ECO:0007669"/>
    <property type="project" value="EnsemblMetazoa"/>
</dbReference>
<dbReference type="GO" id="GO:0061853">
    <property type="term" value="P:regulation of neuroblast migration"/>
    <property type="evidence" value="ECO:0007669"/>
    <property type="project" value="EnsemblMetazoa"/>
</dbReference>
<dbReference type="GO" id="GO:0006357">
    <property type="term" value="P:regulation of transcription by RNA polymerase II"/>
    <property type="evidence" value="ECO:0000318"/>
    <property type="project" value="GO_Central"/>
</dbReference>
<dbReference type="FunFam" id="1.10.30.10:FF:000059">
    <property type="entry name" value="Protein pop-1"/>
    <property type="match status" value="1"/>
</dbReference>
<dbReference type="Gene3D" id="1.10.30.10">
    <property type="entry name" value="High mobility group box domain"/>
    <property type="match status" value="1"/>
</dbReference>
<dbReference type="InterPro" id="IPR009071">
    <property type="entry name" value="HMG_box_dom"/>
</dbReference>
<dbReference type="InterPro" id="IPR036910">
    <property type="entry name" value="HMG_box_dom_sf"/>
</dbReference>
<dbReference type="InterPro" id="IPR024940">
    <property type="entry name" value="TCF/LEF"/>
</dbReference>
<dbReference type="PANTHER" id="PTHR10373:SF38">
    <property type="entry name" value="PROTEIN PANGOLIN, ISOFORM J"/>
    <property type="match status" value="1"/>
</dbReference>
<dbReference type="PANTHER" id="PTHR10373">
    <property type="entry name" value="TRANSCRIPTION FACTOR 7 FAMILY MEMBER"/>
    <property type="match status" value="1"/>
</dbReference>
<dbReference type="Pfam" id="PF00505">
    <property type="entry name" value="HMG_box"/>
    <property type="match status" value="1"/>
</dbReference>
<dbReference type="SMART" id="SM01366">
    <property type="entry name" value="c-clamp"/>
    <property type="match status" value="1"/>
</dbReference>
<dbReference type="SMART" id="SM00398">
    <property type="entry name" value="HMG"/>
    <property type="match status" value="1"/>
</dbReference>
<dbReference type="SUPFAM" id="SSF47095">
    <property type="entry name" value="HMG-box"/>
    <property type="match status" value="1"/>
</dbReference>
<dbReference type="PROSITE" id="PS50118">
    <property type="entry name" value="HMG_BOX_2"/>
    <property type="match status" value="1"/>
</dbReference>
<organism>
    <name type="scientific">Caenorhabditis briggsae</name>
    <dbReference type="NCBI Taxonomy" id="6238"/>
    <lineage>
        <taxon>Eukaryota</taxon>
        <taxon>Metazoa</taxon>
        <taxon>Ecdysozoa</taxon>
        <taxon>Nematoda</taxon>
        <taxon>Chromadorea</taxon>
        <taxon>Rhabditida</taxon>
        <taxon>Rhabditina</taxon>
        <taxon>Rhabditomorpha</taxon>
        <taxon>Rhabditoidea</taxon>
        <taxon>Rhabditidae</taxon>
        <taxon>Peloderinae</taxon>
        <taxon>Caenorhabditis</taxon>
    </lineage>
</organism>
<gene>
    <name evidence="6" type="primary">pop-1</name>
    <name evidence="6" type="ORF">CBG04236</name>
</gene>
<feature type="chain" id="PRO_0000348936" description="Protein pop-1">
    <location>
        <begin position="1"/>
        <end position="439"/>
    </location>
</feature>
<feature type="DNA-binding region" description="HMG box" evidence="3">
    <location>
        <begin position="199"/>
        <end position="269"/>
    </location>
</feature>
<feature type="region of interest" description="Disordered" evidence="4">
    <location>
        <begin position="1"/>
        <end position="38"/>
    </location>
</feature>
<feature type="region of interest" description="Involved in nuclear asymmetry" evidence="1">
    <location>
        <begin position="87"/>
        <end position="138"/>
    </location>
</feature>
<feature type="region of interest" description="Disordered" evidence="4">
    <location>
        <begin position="254"/>
        <end position="298"/>
    </location>
</feature>
<feature type="region of interest" description="Disordered" evidence="4">
    <location>
        <begin position="329"/>
        <end position="365"/>
    </location>
</feature>
<feature type="region of interest" description="Disordered" evidence="4">
    <location>
        <begin position="385"/>
        <end position="439"/>
    </location>
</feature>
<feature type="compositionally biased region" description="Basic and acidic residues" evidence="4">
    <location>
        <begin position="9"/>
        <end position="18"/>
    </location>
</feature>
<feature type="compositionally biased region" description="Basic and acidic residues" evidence="4">
    <location>
        <begin position="254"/>
        <end position="265"/>
    </location>
</feature>
<feature type="compositionally biased region" description="Basic residues" evidence="4">
    <location>
        <begin position="277"/>
        <end position="286"/>
    </location>
</feature>
<feature type="compositionally biased region" description="Low complexity" evidence="4">
    <location>
        <begin position="346"/>
        <end position="365"/>
    </location>
</feature>
<feature type="compositionally biased region" description="Low complexity" evidence="4">
    <location>
        <begin position="385"/>
        <end position="400"/>
    </location>
</feature>
<feature type="compositionally biased region" description="Acidic residues" evidence="4">
    <location>
        <begin position="409"/>
        <end position="420"/>
    </location>
</feature>
<feature type="compositionally biased region" description="Polar residues" evidence="4">
    <location>
        <begin position="422"/>
        <end position="439"/>
    </location>
</feature>
<feature type="modified residue" description="Phosphoserine; by LIT1" evidence="2">
    <location>
        <position position="125"/>
    </location>
</feature>
<comment type="function">
    <text evidence="2">Part of the Wnt signaling pathway essential for the specification of the mesodermal cell fate in early embryos (By similarity). Required for asymmetrical division of somatic gonadal precursor descendants which initiate axis formation required to control organ shape (By similarity). Similarly, involved in asymmetrical division of seam cells, a stem cell-like lineage (By similarity). Represses expression of target genes via its interaction with hda-1 histone deacetylase (By similarity). Required for specification of the M lineage-derived coelomocyte and sex myoblast fate (By similarity). Regulates coelomocyte fate by positively regulating proliferation and ceh-34 and possibly eya-1 expression in M.dlpa and M.drpa precursors (By similarity).</text>
</comment>
<comment type="subunit">
    <text evidence="2">Interacts with hda-1 (By similarity). Interacts with bar-1 (By similarity). Interacts with par-5; the interaction is direct and is enhanced by lit-1-mediated pop-1 phosphorylation (By similarity). The interaction also leads to the subsequent nuclear export of pop-1 (By similarity). Interacts (when phosphorylated on Ser-125) with lit-1; the interaction is dependent on the beta-catenin-lit-1 complex (By similarity). Interacts with wrm-1 (By similarity).</text>
</comment>
<comment type="subcellular location">
    <subcellularLocation>
        <location evidence="2 3">Nucleus</location>
    </subcellularLocation>
    <subcellularLocation>
        <location evidence="2">Cytoplasm</location>
    </subcellularLocation>
    <text evidence="2">Predominantly nuclear, but is exported out of the nucleus and into the cytoplasm upon lit-1-mediated phosphorylation (By similarity). Soon after the nuclei reform in telophase, pop-1 levels decrease in the posterior nucleus, in contrast to the anterior nucleus (By similarity). There is a ~2-fold nuclear enrichment of pop-1 in the anterior compared with posterior daughter cells at the time of cytokinesis (By similarity).</text>
</comment>
<comment type="PTM">
    <text evidence="2">Phosphorylated on Ser-125 by lit-1 in the beta-catenin-lit-1 complex (By similarity). Phosphorylation promotes the interaction of pop-1 and par-5 and the subsequent translocation of pop-1 from the nucleus to the cytoplasm (By similarity).</text>
</comment>
<comment type="similarity">
    <text evidence="5">Belongs to the TCF/LEF family.</text>
</comment>
<evidence type="ECO:0000250" key="1"/>
<evidence type="ECO:0000250" key="2">
    <source>
        <dbReference type="UniProtKB" id="Q10666"/>
    </source>
</evidence>
<evidence type="ECO:0000255" key="3">
    <source>
        <dbReference type="PROSITE-ProRule" id="PRU00267"/>
    </source>
</evidence>
<evidence type="ECO:0000256" key="4">
    <source>
        <dbReference type="SAM" id="MobiDB-lite"/>
    </source>
</evidence>
<evidence type="ECO:0000305" key="5"/>
<evidence type="ECO:0000312" key="6">
    <source>
        <dbReference type="WormBase" id="CBG04236"/>
    </source>
</evidence>
<sequence length="439" mass="48851">MMADEELGDEVKVFRRDEDADDDPMISGETSEQQLADDKKDAVMEAELDGAGRVPLIGGLKAEIKAEPSPSFPMPSMLPCGPYSPFSGLPIMFPMVVPQYLSPNPNINMMNMMTMRAAMAGAPLSPAFPAMFSPNPLFPFPGVVAKQHLENTMPMHMRAGPLSSLNHMKMPPYMPHQMMPQHNERRGHGGGKVKKEDHIKKPLNAFMWYMKENRPKLLEEVGNDQKQSAELNKELGKRWHDLPKEEQQKYFEMAKKDRESHKEKYPQWSARENYAVNKKKPKRKRDKSVVSGSENNDQKKCRARFGVTNTSMWCKPCQRKKKCIYATDRSGSELNDGHDGRGTSGGCSSSSESSSPNNNQPMPMNAPQTVAAMHAMLMGMQIGQSAHLASSHSTGSSGTSPPVANPSDSESDVDEDEDIDPTITQQTQEYIMQESVCTL</sequence>
<reference key="1">
    <citation type="journal article" date="2003" name="PLoS Biol.">
        <title>The genome sequence of Caenorhabditis briggsae: a platform for comparative genomics.</title>
        <authorList>
            <person name="Stein L.D."/>
            <person name="Bao Z."/>
            <person name="Blasiar D."/>
            <person name="Blumenthal T."/>
            <person name="Brent M.R."/>
            <person name="Chen N."/>
            <person name="Chinwalla A."/>
            <person name="Clarke L."/>
            <person name="Clee C."/>
            <person name="Coghlan A."/>
            <person name="Coulson A."/>
            <person name="D'Eustachio P."/>
            <person name="Fitch D.H.A."/>
            <person name="Fulton L.A."/>
            <person name="Fulton R.E."/>
            <person name="Griffiths-Jones S."/>
            <person name="Harris T.W."/>
            <person name="Hillier L.W."/>
            <person name="Kamath R."/>
            <person name="Kuwabara P.E."/>
            <person name="Mardis E.R."/>
            <person name="Marra M.A."/>
            <person name="Miner T.L."/>
            <person name="Minx P."/>
            <person name="Mullikin J.C."/>
            <person name="Plumb R.W."/>
            <person name="Rogers J."/>
            <person name="Schein J.E."/>
            <person name="Sohrmann M."/>
            <person name="Spieth J."/>
            <person name="Stajich J.E."/>
            <person name="Wei C."/>
            <person name="Willey D."/>
            <person name="Wilson R.K."/>
            <person name="Durbin R.M."/>
            <person name="Waterston R.H."/>
        </authorList>
    </citation>
    <scope>NUCLEOTIDE SEQUENCE [LARGE SCALE GENOMIC DNA]</scope>
    <source>
        <strain>AF16</strain>
    </source>
</reference>
<keyword id="KW-0010">Activator</keyword>
<keyword id="KW-0963">Cytoplasm</keyword>
<keyword id="KW-0217">Developmental protein</keyword>
<keyword id="KW-0238">DNA-binding</keyword>
<keyword id="KW-0539">Nucleus</keyword>
<keyword id="KW-0597">Phosphoprotein</keyword>
<keyword id="KW-1185">Reference proteome</keyword>
<keyword id="KW-0804">Transcription</keyword>
<keyword id="KW-0805">Transcription regulation</keyword>
<keyword id="KW-0879">Wnt signaling pathway</keyword>
<accession>A8WWH5</accession>